<protein>
    <recommendedName>
        <fullName evidence="1">4-diphosphocytidyl-2-C-methyl-D-erythritol kinase</fullName>
        <shortName evidence="1">CMK</shortName>
        <ecNumber evidence="1">2.7.1.148</ecNumber>
    </recommendedName>
    <alternativeName>
        <fullName evidence="1">4-(cytidine-5'-diphospho)-2-C-methyl-D-erythritol kinase</fullName>
    </alternativeName>
</protein>
<reference key="1">
    <citation type="submission" date="2007-02" db="EMBL/GenBank/DDBJ databases">
        <title>Complete sequence of chromosome 1 of Rhodobacter sphaeroides ATCC 17029.</title>
        <authorList>
            <person name="Copeland A."/>
            <person name="Lucas S."/>
            <person name="Lapidus A."/>
            <person name="Barry K."/>
            <person name="Detter J.C."/>
            <person name="Glavina del Rio T."/>
            <person name="Hammon N."/>
            <person name="Israni S."/>
            <person name="Dalin E."/>
            <person name="Tice H."/>
            <person name="Pitluck S."/>
            <person name="Kiss H."/>
            <person name="Brettin T."/>
            <person name="Bruce D."/>
            <person name="Han C."/>
            <person name="Tapia R."/>
            <person name="Gilna P."/>
            <person name="Schmutz J."/>
            <person name="Larimer F."/>
            <person name="Land M."/>
            <person name="Hauser L."/>
            <person name="Kyrpides N."/>
            <person name="Mikhailova N."/>
            <person name="Richardson P."/>
            <person name="Mackenzie C."/>
            <person name="Choudhary M."/>
            <person name="Donohue T.J."/>
            <person name="Kaplan S."/>
        </authorList>
    </citation>
    <scope>NUCLEOTIDE SEQUENCE [LARGE SCALE GENOMIC DNA]</scope>
    <source>
        <strain>ATCC 17029 / ATH 2.4.9</strain>
    </source>
</reference>
<accession>A3PGS6</accession>
<comment type="function">
    <text evidence="1">Catalyzes the phosphorylation of the position 2 hydroxy group of 4-diphosphocytidyl-2C-methyl-D-erythritol.</text>
</comment>
<comment type="catalytic activity">
    <reaction evidence="1">
        <text>4-CDP-2-C-methyl-D-erythritol + ATP = 4-CDP-2-C-methyl-D-erythritol 2-phosphate + ADP + H(+)</text>
        <dbReference type="Rhea" id="RHEA:18437"/>
        <dbReference type="ChEBI" id="CHEBI:15378"/>
        <dbReference type="ChEBI" id="CHEBI:30616"/>
        <dbReference type="ChEBI" id="CHEBI:57823"/>
        <dbReference type="ChEBI" id="CHEBI:57919"/>
        <dbReference type="ChEBI" id="CHEBI:456216"/>
        <dbReference type="EC" id="2.7.1.148"/>
    </reaction>
</comment>
<comment type="pathway">
    <text evidence="1">Isoprenoid biosynthesis; isopentenyl diphosphate biosynthesis via DXP pathway; isopentenyl diphosphate from 1-deoxy-D-xylulose 5-phosphate: step 3/6.</text>
</comment>
<comment type="similarity">
    <text evidence="1">Belongs to the GHMP kinase family. IspE subfamily.</text>
</comment>
<organism>
    <name type="scientific">Cereibacter sphaeroides (strain ATCC 17029 / ATH 2.4.9)</name>
    <name type="common">Rhodobacter sphaeroides</name>
    <dbReference type="NCBI Taxonomy" id="349101"/>
    <lineage>
        <taxon>Bacteria</taxon>
        <taxon>Pseudomonadati</taxon>
        <taxon>Pseudomonadota</taxon>
        <taxon>Alphaproteobacteria</taxon>
        <taxon>Rhodobacterales</taxon>
        <taxon>Paracoccaceae</taxon>
        <taxon>Cereibacter</taxon>
    </lineage>
</organism>
<dbReference type="EC" id="2.7.1.148" evidence="1"/>
<dbReference type="EMBL" id="CP000577">
    <property type="protein sequence ID" value="ABN75542.1"/>
    <property type="molecule type" value="Genomic_DNA"/>
</dbReference>
<dbReference type="RefSeq" id="WP_011840347.1">
    <property type="nucleotide sequence ID" value="NC_009049.1"/>
</dbReference>
<dbReference type="SMR" id="A3PGS6"/>
<dbReference type="KEGG" id="rsh:Rsph17029_0426"/>
<dbReference type="HOGENOM" id="CLU_053057_1_0_5"/>
<dbReference type="UniPathway" id="UPA00056">
    <property type="reaction ID" value="UER00094"/>
</dbReference>
<dbReference type="GO" id="GO:0050515">
    <property type="term" value="F:4-(cytidine 5'-diphospho)-2-C-methyl-D-erythritol kinase activity"/>
    <property type="evidence" value="ECO:0007669"/>
    <property type="project" value="UniProtKB-UniRule"/>
</dbReference>
<dbReference type="GO" id="GO:0005524">
    <property type="term" value="F:ATP binding"/>
    <property type="evidence" value="ECO:0007669"/>
    <property type="project" value="UniProtKB-UniRule"/>
</dbReference>
<dbReference type="GO" id="GO:0019288">
    <property type="term" value="P:isopentenyl diphosphate biosynthetic process, methylerythritol 4-phosphate pathway"/>
    <property type="evidence" value="ECO:0007669"/>
    <property type="project" value="UniProtKB-UniRule"/>
</dbReference>
<dbReference type="GO" id="GO:0016114">
    <property type="term" value="P:terpenoid biosynthetic process"/>
    <property type="evidence" value="ECO:0007669"/>
    <property type="project" value="InterPro"/>
</dbReference>
<dbReference type="Gene3D" id="3.30.230.10">
    <property type="match status" value="1"/>
</dbReference>
<dbReference type="Gene3D" id="3.30.70.890">
    <property type="entry name" value="GHMP kinase, C-terminal domain"/>
    <property type="match status" value="1"/>
</dbReference>
<dbReference type="HAMAP" id="MF_00061">
    <property type="entry name" value="IspE"/>
    <property type="match status" value="1"/>
</dbReference>
<dbReference type="InterPro" id="IPR013750">
    <property type="entry name" value="GHMP_kinase_C_dom"/>
</dbReference>
<dbReference type="InterPro" id="IPR036554">
    <property type="entry name" value="GHMP_kinase_C_sf"/>
</dbReference>
<dbReference type="InterPro" id="IPR006204">
    <property type="entry name" value="GHMP_kinase_N_dom"/>
</dbReference>
<dbReference type="InterPro" id="IPR004424">
    <property type="entry name" value="IspE"/>
</dbReference>
<dbReference type="InterPro" id="IPR020568">
    <property type="entry name" value="Ribosomal_Su5_D2-typ_SF"/>
</dbReference>
<dbReference type="InterPro" id="IPR014721">
    <property type="entry name" value="Ribsml_uS5_D2-typ_fold_subgr"/>
</dbReference>
<dbReference type="NCBIfam" id="TIGR00154">
    <property type="entry name" value="ispE"/>
    <property type="match status" value="1"/>
</dbReference>
<dbReference type="NCBIfam" id="NF011202">
    <property type="entry name" value="PRK14608.1"/>
    <property type="match status" value="1"/>
</dbReference>
<dbReference type="PANTHER" id="PTHR43527">
    <property type="entry name" value="4-DIPHOSPHOCYTIDYL-2-C-METHYL-D-ERYTHRITOL KINASE, CHLOROPLASTIC"/>
    <property type="match status" value="1"/>
</dbReference>
<dbReference type="PANTHER" id="PTHR43527:SF2">
    <property type="entry name" value="4-DIPHOSPHOCYTIDYL-2-C-METHYL-D-ERYTHRITOL KINASE, CHLOROPLASTIC"/>
    <property type="match status" value="1"/>
</dbReference>
<dbReference type="Pfam" id="PF08544">
    <property type="entry name" value="GHMP_kinases_C"/>
    <property type="match status" value="1"/>
</dbReference>
<dbReference type="Pfam" id="PF00288">
    <property type="entry name" value="GHMP_kinases_N"/>
    <property type="match status" value="1"/>
</dbReference>
<dbReference type="PIRSF" id="PIRSF010376">
    <property type="entry name" value="IspE"/>
    <property type="match status" value="1"/>
</dbReference>
<dbReference type="SUPFAM" id="SSF55060">
    <property type="entry name" value="GHMP Kinase, C-terminal domain"/>
    <property type="match status" value="1"/>
</dbReference>
<dbReference type="SUPFAM" id="SSF54211">
    <property type="entry name" value="Ribosomal protein S5 domain 2-like"/>
    <property type="match status" value="1"/>
</dbReference>
<gene>
    <name evidence="1" type="primary">ispE</name>
    <name type="ordered locus">Rsph17029_0426</name>
</gene>
<sequence length="278" mass="28590">MTEAFARAKINLTLHVTGQRPDGYHLLDSLVVFADVGDRVRAEPAEALSLAITGPQAANLPVADDNLVLRAARTLGGQGARLTLEKHLPVASGIGGGSADAAAALVALARLWQVPLPDPAAVLKLGADVPVCLEGRAVRMAGVGEILTPLAAPLPEAWLVLANPGVSVPTPPVFKALARRDNPPMPDDLPGWPTVESLAAFLATQRNDLEPPAIALAPEIARTRAALAAQPGCLLARMSGSGATCFGLFAAEEAARAAAEAIGAEHPGWWVAPARMVG</sequence>
<keyword id="KW-0067">ATP-binding</keyword>
<keyword id="KW-0414">Isoprene biosynthesis</keyword>
<keyword id="KW-0418">Kinase</keyword>
<keyword id="KW-0547">Nucleotide-binding</keyword>
<keyword id="KW-0808">Transferase</keyword>
<evidence type="ECO:0000255" key="1">
    <source>
        <dbReference type="HAMAP-Rule" id="MF_00061"/>
    </source>
</evidence>
<feature type="chain" id="PRO_1000007882" description="4-diphosphocytidyl-2-C-methyl-D-erythritol kinase">
    <location>
        <begin position="1"/>
        <end position="278"/>
    </location>
</feature>
<feature type="active site" evidence="1">
    <location>
        <position position="9"/>
    </location>
</feature>
<feature type="active site" evidence="1">
    <location>
        <position position="128"/>
    </location>
</feature>
<feature type="binding site" evidence="1">
    <location>
        <begin position="89"/>
        <end position="99"/>
    </location>
    <ligand>
        <name>ATP</name>
        <dbReference type="ChEBI" id="CHEBI:30616"/>
    </ligand>
</feature>
<name>ISPE_CERS1</name>
<proteinExistence type="inferred from homology"/>